<keyword id="KW-0027">Amidation</keyword>
<keyword id="KW-0903">Direct protein sequencing</keyword>
<keyword id="KW-0873">Pyrrolidone carboxylic acid</keyword>
<keyword id="KW-0964">Secreted</keyword>
<organism>
    <name type="scientific">Batozonellus maculifrons</name>
    <name type="common">Solitary wasp</name>
    <dbReference type="NCBI Taxonomy" id="308766"/>
    <lineage>
        <taxon>Eukaryota</taxon>
        <taxon>Metazoa</taxon>
        <taxon>Ecdysozoa</taxon>
        <taxon>Arthropoda</taxon>
        <taxon>Hexapoda</taxon>
        <taxon>Insecta</taxon>
        <taxon>Pterygota</taxon>
        <taxon>Neoptera</taxon>
        <taxon>Endopterygota</taxon>
        <taxon>Hymenoptera</taxon>
        <taxon>Apocrita</taxon>
        <taxon>Aculeata</taxon>
        <taxon>Pompiloidea</taxon>
        <taxon>Pompilidae</taxon>
        <taxon>Pompilinae</taxon>
        <taxon>Batozonellus</taxon>
    </lineage>
</organism>
<accession>P0DUV0</accession>
<evidence type="ECO:0000269" key="1">
    <source>
    </source>
</evidence>
<evidence type="ECO:0000303" key="2">
    <source>
    </source>
</evidence>
<evidence type="ECO:0000305" key="3"/>
<evidence type="ECO:0000305" key="4">
    <source>
    </source>
</evidence>
<evidence type="ECO:0000305" key="5">
    <source>
    </source>
</evidence>
<sequence length="11" mass="1139">QTAPVPKAISK</sequence>
<feature type="peptide" id="PRO_0000453650" description="Peptide Bm-10" evidence="1">
    <location>
        <begin position="1"/>
        <end position="11"/>
    </location>
</feature>
<feature type="modified residue" description="Pyrrolidone carboxylic acid" evidence="1">
    <location>
        <position position="1"/>
    </location>
</feature>
<feature type="modified residue" description="Lysine amide" evidence="1">
    <location>
        <position position="11"/>
    </location>
</feature>
<feature type="unsure residue" description="Q or E" evidence="3">
    <location>
        <position position="1"/>
    </location>
</feature>
<protein>
    <recommendedName>
        <fullName evidence="2">Peptide Bm-10</fullName>
    </recommendedName>
</protein>
<comment type="subcellular location">
    <subcellularLocation>
        <location evidence="1">Secreted</location>
    </subcellularLocation>
</comment>
<comment type="tissue specificity">
    <text evidence="4">Expressed by the venom gland.</text>
</comment>
<comment type="mass spectrometry" mass="1120.6" method="MALDI" evidence="1"/>
<comment type="miscellaneous">
    <text evidence="5">Is a minor component of B.maculifrons venom.</text>
</comment>
<name>BM10_BATMC</name>
<dbReference type="GO" id="GO:0005576">
    <property type="term" value="C:extracellular region"/>
    <property type="evidence" value="ECO:0007669"/>
    <property type="project" value="UniProtKB-SubCell"/>
</dbReference>
<proteinExistence type="evidence at protein level"/>
<reference key="1">
    <citation type="journal article" date="2002" name="Rapid Commun. Mass Spectrom.">
        <title>Sequencing wasp venom peptides by endopeptidase digestion and nested collision-induced dissociation/post-source decay methods.</title>
        <authorList>
            <person name="Hisada M."/>
            <person name="Konno K."/>
            <person name="Itagaki Y."/>
            <person name="Naoki H."/>
            <person name="Nakajima T."/>
        </authorList>
    </citation>
    <scope>PROTEIN SEQUENCE</scope>
    <scope>SUBCELLULAR LOCATION</scope>
    <scope>PYROGLUTAMATE FORMATION AT GLN-1</scope>
    <scope>AMIDATION AT LYS-11</scope>
    <scope>MASS SPECTROMETRY</scope>
    <source>
        <tissue>Venom</tissue>
    </source>
</reference>
<reference key="2">
    <citation type="journal article" date="2016" name="Toxins">
        <title>Peptide toxins in solitary wasp venoms.</title>
        <authorList>
            <person name="Konno K."/>
            <person name="Kazuma K."/>
            <person name="Nihei K."/>
        </authorList>
    </citation>
    <scope>REVIEW</scope>
</reference>